<gene>
    <name evidence="1" type="primary">ureD</name>
    <name type="ordered locus">Oter_4212</name>
</gene>
<name>URED_OPITP</name>
<reference key="1">
    <citation type="journal article" date="2011" name="J. Bacteriol.">
        <title>Genome sequence of the verrucomicrobium Opitutus terrae PB90-1, an abundant inhabitant of rice paddy soil ecosystems.</title>
        <authorList>
            <person name="van Passel M.W."/>
            <person name="Kant R."/>
            <person name="Palva A."/>
            <person name="Copeland A."/>
            <person name="Lucas S."/>
            <person name="Lapidus A."/>
            <person name="Glavina del Rio T."/>
            <person name="Pitluck S."/>
            <person name="Goltsman E."/>
            <person name="Clum A."/>
            <person name="Sun H."/>
            <person name="Schmutz J."/>
            <person name="Larimer F.W."/>
            <person name="Land M.L."/>
            <person name="Hauser L."/>
            <person name="Kyrpides N."/>
            <person name="Mikhailova N."/>
            <person name="Richardson P.P."/>
            <person name="Janssen P.H."/>
            <person name="de Vos W.M."/>
            <person name="Smidt H."/>
        </authorList>
    </citation>
    <scope>NUCLEOTIDE SEQUENCE [LARGE SCALE GENOMIC DNA]</scope>
    <source>
        <strain>DSM 11246 / JCM 15787 / PB90-1</strain>
    </source>
</reference>
<feature type="chain" id="PRO_0000346584" description="Urease accessory protein UreD">
    <location>
        <begin position="1"/>
        <end position="272"/>
    </location>
</feature>
<proteinExistence type="inferred from homology"/>
<organism>
    <name type="scientific">Opitutus terrae (strain DSM 11246 / JCM 15787 / PB90-1)</name>
    <dbReference type="NCBI Taxonomy" id="452637"/>
    <lineage>
        <taxon>Bacteria</taxon>
        <taxon>Pseudomonadati</taxon>
        <taxon>Verrucomicrobiota</taxon>
        <taxon>Opitutia</taxon>
        <taxon>Opitutales</taxon>
        <taxon>Opitutaceae</taxon>
        <taxon>Opitutus</taxon>
    </lineage>
</organism>
<accession>B1ZNZ6</accession>
<dbReference type="EMBL" id="CP001032">
    <property type="protein sequence ID" value="ACB77485.1"/>
    <property type="molecule type" value="Genomic_DNA"/>
</dbReference>
<dbReference type="RefSeq" id="WP_012377013.1">
    <property type="nucleotide sequence ID" value="NC_010571.1"/>
</dbReference>
<dbReference type="SMR" id="B1ZNZ6"/>
<dbReference type="STRING" id="452637.Oter_4212"/>
<dbReference type="KEGG" id="ote:Oter_4212"/>
<dbReference type="eggNOG" id="COG0829">
    <property type="taxonomic scope" value="Bacteria"/>
</dbReference>
<dbReference type="HOGENOM" id="CLU_056339_5_0_0"/>
<dbReference type="OrthoDB" id="5328682at2"/>
<dbReference type="Proteomes" id="UP000007013">
    <property type="component" value="Chromosome"/>
</dbReference>
<dbReference type="GO" id="GO:0005737">
    <property type="term" value="C:cytoplasm"/>
    <property type="evidence" value="ECO:0007669"/>
    <property type="project" value="UniProtKB-SubCell"/>
</dbReference>
<dbReference type="GO" id="GO:0016151">
    <property type="term" value="F:nickel cation binding"/>
    <property type="evidence" value="ECO:0007669"/>
    <property type="project" value="UniProtKB-UniRule"/>
</dbReference>
<dbReference type="HAMAP" id="MF_01384">
    <property type="entry name" value="UreD"/>
    <property type="match status" value="1"/>
</dbReference>
<dbReference type="InterPro" id="IPR002669">
    <property type="entry name" value="UreD"/>
</dbReference>
<dbReference type="PANTHER" id="PTHR33643">
    <property type="entry name" value="UREASE ACCESSORY PROTEIN D"/>
    <property type="match status" value="1"/>
</dbReference>
<dbReference type="PANTHER" id="PTHR33643:SF1">
    <property type="entry name" value="UREASE ACCESSORY PROTEIN D"/>
    <property type="match status" value="1"/>
</dbReference>
<dbReference type="Pfam" id="PF01774">
    <property type="entry name" value="UreD"/>
    <property type="match status" value="1"/>
</dbReference>
<comment type="function">
    <text evidence="1">Required for maturation of urease via the functional incorporation of the urease nickel metallocenter.</text>
</comment>
<comment type="subunit">
    <text evidence="1">UreD, UreF and UreG form a complex that acts as a GTP-hydrolysis-dependent molecular chaperone, activating the urease apoprotein by helping to assemble the nickel containing metallocenter of UreC. The UreE protein probably delivers the nickel.</text>
</comment>
<comment type="subcellular location">
    <subcellularLocation>
        <location evidence="1">Cytoplasm</location>
    </subcellularLocation>
</comment>
<comment type="similarity">
    <text evidence="1">Belongs to the UreD family.</text>
</comment>
<sequence length="272" mass="29708">MDFAGHLHLRAAPRAFGHTALTLQSFRAPFHLSKPYWDYDSRVLLVQVVNPTAGILAGDRIESEITVDAGAALLITTPSASRVFRMDAGVATCRQHFTVAAGAWLEVMPGPLVPHRGSDYRQSTIVELTRGAGGFFVDQLMPGRAAHGEAWAWRRLCLEFECRLDGRLLVRERVDQSGEELRALAELAGSGAAACFANAILIPGAEADEDWRAAVEGLHRDGAWVGVSALREAGWSIKVIAPDGAYLRETLRAIRAVLAEAFPRMRCDPRRL</sequence>
<evidence type="ECO:0000255" key="1">
    <source>
        <dbReference type="HAMAP-Rule" id="MF_01384"/>
    </source>
</evidence>
<protein>
    <recommendedName>
        <fullName evidence="1">Urease accessory protein UreD</fullName>
    </recommendedName>
</protein>
<keyword id="KW-0143">Chaperone</keyword>
<keyword id="KW-0963">Cytoplasm</keyword>
<keyword id="KW-0996">Nickel insertion</keyword>
<keyword id="KW-1185">Reference proteome</keyword>